<sequence>MSQPKPILYYDERSPPVRSCLMLIKLLDIDVELRFVNLFKGEQFQKDFLALNPQHSVPTLVHGDLVLTDSHAILIHLAEKFDEGGSLWPQEHAERMKVLNLLLFECSFLFRRDSDFMSATVRQGFANVDVAHHERKLTEAYIIMERYLENSDFMAGPQLTLADLSIVTTLSTVNLMFPLSQFPRLRRWFTAMQQLDAYEANCSGLEKLRQTMESVGSFQFPSSSAVVTEKVE</sequence>
<reference evidence="10" key="1">
    <citation type="journal article" date="2000" name="Science">
        <title>The genome sequence of Drosophila melanogaster.</title>
        <authorList>
            <person name="Adams M.D."/>
            <person name="Celniker S.E."/>
            <person name="Holt R.A."/>
            <person name="Evans C.A."/>
            <person name="Gocayne J.D."/>
            <person name="Amanatides P.G."/>
            <person name="Scherer S.E."/>
            <person name="Li P.W."/>
            <person name="Hoskins R.A."/>
            <person name="Galle R.F."/>
            <person name="George R.A."/>
            <person name="Lewis S.E."/>
            <person name="Richards S."/>
            <person name="Ashburner M."/>
            <person name="Henderson S.N."/>
            <person name="Sutton G.G."/>
            <person name="Wortman J.R."/>
            <person name="Yandell M.D."/>
            <person name="Zhang Q."/>
            <person name="Chen L.X."/>
            <person name="Brandon R.C."/>
            <person name="Rogers Y.-H.C."/>
            <person name="Blazej R.G."/>
            <person name="Champe M."/>
            <person name="Pfeiffer B.D."/>
            <person name="Wan K.H."/>
            <person name="Doyle C."/>
            <person name="Baxter E.G."/>
            <person name="Helt G."/>
            <person name="Nelson C.R."/>
            <person name="Miklos G.L.G."/>
            <person name="Abril J.F."/>
            <person name="Agbayani A."/>
            <person name="An H.-J."/>
            <person name="Andrews-Pfannkoch C."/>
            <person name="Baldwin D."/>
            <person name="Ballew R.M."/>
            <person name="Basu A."/>
            <person name="Baxendale J."/>
            <person name="Bayraktaroglu L."/>
            <person name="Beasley E.M."/>
            <person name="Beeson K.Y."/>
            <person name="Benos P.V."/>
            <person name="Berman B.P."/>
            <person name="Bhandari D."/>
            <person name="Bolshakov S."/>
            <person name="Borkova D."/>
            <person name="Botchan M.R."/>
            <person name="Bouck J."/>
            <person name="Brokstein P."/>
            <person name="Brottier P."/>
            <person name="Burtis K.C."/>
            <person name="Busam D.A."/>
            <person name="Butler H."/>
            <person name="Cadieu E."/>
            <person name="Center A."/>
            <person name="Chandra I."/>
            <person name="Cherry J.M."/>
            <person name="Cawley S."/>
            <person name="Dahlke C."/>
            <person name="Davenport L.B."/>
            <person name="Davies P."/>
            <person name="de Pablos B."/>
            <person name="Delcher A."/>
            <person name="Deng Z."/>
            <person name="Mays A.D."/>
            <person name="Dew I."/>
            <person name="Dietz S.M."/>
            <person name="Dodson K."/>
            <person name="Doup L.E."/>
            <person name="Downes M."/>
            <person name="Dugan-Rocha S."/>
            <person name="Dunkov B.C."/>
            <person name="Dunn P."/>
            <person name="Durbin K.J."/>
            <person name="Evangelista C.C."/>
            <person name="Ferraz C."/>
            <person name="Ferriera S."/>
            <person name="Fleischmann W."/>
            <person name="Fosler C."/>
            <person name="Gabrielian A.E."/>
            <person name="Garg N.S."/>
            <person name="Gelbart W.M."/>
            <person name="Glasser K."/>
            <person name="Glodek A."/>
            <person name="Gong F."/>
            <person name="Gorrell J.H."/>
            <person name="Gu Z."/>
            <person name="Guan P."/>
            <person name="Harris M."/>
            <person name="Harris N.L."/>
            <person name="Harvey D.A."/>
            <person name="Heiman T.J."/>
            <person name="Hernandez J.R."/>
            <person name="Houck J."/>
            <person name="Hostin D."/>
            <person name="Houston K.A."/>
            <person name="Howland T.J."/>
            <person name="Wei M.-H."/>
            <person name="Ibegwam C."/>
            <person name="Jalali M."/>
            <person name="Kalush F."/>
            <person name="Karpen G.H."/>
            <person name="Ke Z."/>
            <person name="Kennison J.A."/>
            <person name="Ketchum K.A."/>
            <person name="Kimmel B.E."/>
            <person name="Kodira C.D."/>
            <person name="Kraft C.L."/>
            <person name="Kravitz S."/>
            <person name="Kulp D."/>
            <person name="Lai Z."/>
            <person name="Lasko P."/>
            <person name="Lei Y."/>
            <person name="Levitsky A.A."/>
            <person name="Li J.H."/>
            <person name="Li Z."/>
            <person name="Liang Y."/>
            <person name="Lin X."/>
            <person name="Liu X."/>
            <person name="Mattei B."/>
            <person name="McIntosh T.C."/>
            <person name="McLeod M.P."/>
            <person name="McPherson D."/>
            <person name="Merkulov G."/>
            <person name="Milshina N.V."/>
            <person name="Mobarry C."/>
            <person name="Morris J."/>
            <person name="Moshrefi A."/>
            <person name="Mount S.M."/>
            <person name="Moy M."/>
            <person name="Murphy B."/>
            <person name="Murphy L."/>
            <person name="Muzny D.M."/>
            <person name="Nelson D.L."/>
            <person name="Nelson D.R."/>
            <person name="Nelson K.A."/>
            <person name="Nixon K."/>
            <person name="Nusskern D.R."/>
            <person name="Pacleb J.M."/>
            <person name="Palazzolo M."/>
            <person name="Pittman G.S."/>
            <person name="Pan S."/>
            <person name="Pollard J."/>
            <person name="Puri V."/>
            <person name="Reese M.G."/>
            <person name="Reinert K."/>
            <person name="Remington K."/>
            <person name="Saunders R.D.C."/>
            <person name="Scheeler F."/>
            <person name="Shen H."/>
            <person name="Shue B.C."/>
            <person name="Siden-Kiamos I."/>
            <person name="Simpson M."/>
            <person name="Skupski M.P."/>
            <person name="Smith T.J."/>
            <person name="Spier E."/>
            <person name="Spradling A.C."/>
            <person name="Stapleton M."/>
            <person name="Strong R."/>
            <person name="Sun E."/>
            <person name="Svirskas R."/>
            <person name="Tector C."/>
            <person name="Turner R."/>
            <person name="Venter E."/>
            <person name="Wang A.H."/>
            <person name="Wang X."/>
            <person name="Wang Z.-Y."/>
            <person name="Wassarman D.A."/>
            <person name="Weinstock G.M."/>
            <person name="Weissenbach J."/>
            <person name="Williams S.M."/>
            <person name="Woodage T."/>
            <person name="Worley K.C."/>
            <person name="Wu D."/>
            <person name="Yang S."/>
            <person name="Yao Q.A."/>
            <person name="Ye J."/>
            <person name="Yeh R.-F."/>
            <person name="Zaveri J.S."/>
            <person name="Zhan M."/>
            <person name="Zhang G."/>
            <person name="Zhao Q."/>
            <person name="Zheng L."/>
            <person name="Zheng X.H."/>
            <person name="Zhong F.N."/>
            <person name="Zhong W."/>
            <person name="Zhou X."/>
            <person name="Zhu S.C."/>
            <person name="Zhu X."/>
            <person name="Smith H.O."/>
            <person name="Gibbs R.A."/>
            <person name="Myers E.W."/>
            <person name="Rubin G.M."/>
            <person name="Venter J.C."/>
        </authorList>
    </citation>
    <scope>NUCLEOTIDE SEQUENCE [LARGE SCALE GENOMIC DNA]</scope>
    <source>
        <strain>Berkeley</strain>
    </source>
</reference>
<reference evidence="10" key="2">
    <citation type="journal article" date="2002" name="Genome Biol.">
        <title>Annotation of the Drosophila melanogaster euchromatic genome: a systematic review.</title>
        <authorList>
            <person name="Misra S."/>
            <person name="Crosby M.A."/>
            <person name="Mungall C.J."/>
            <person name="Matthews B.B."/>
            <person name="Campbell K.S."/>
            <person name="Hradecky P."/>
            <person name="Huang Y."/>
            <person name="Kaminker J.S."/>
            <person name="Millburn G.H."/>
            <person name="Prochnik S.E."/>
            <person name="Smith C.D."/>
            <person name="Tupy J.L."/>
            <person name="Whitfield E.J."/>
            <person name="Bayraktaroglu L."/>
            <person name="Berman B.P."/>
            <person name="Bettencourt B.R."/>
            <person name="Celniker S.E."/>
            <person name="de Grey A.D.N.J."/>
            <person name="Drysdale R.A."/>
            <person name="Harris N.L."/>
            <person name="Richter J."/>
            <person name="Russo S."/>
            <person name="Schroeder A.J."/>
            <person name="Shu S.Q."/>
            <person name="Stapleton M."/>
            <person name="Yamada C."/>
            <person name="Ashburner M."/>
            <person name="Gelbart W.M."/>
            <person name="Rubin G.M."/>
            <person name="Lewis S.E."/>
        </authorList>
    </citation>
    <scope>GENOME REANNOTATION</scope>
    <source>
        <strain evidence="10">Berkeley</strain>
    </source>
</reference>
<reference evidence="8" key="3">
    <citation type="journal article" date="2002" name="Genome Biol.">
        <title>A Drosophila full-length cDNA resource.</title>
        <authorList>
            <person name="Stapleton M."/>
            <person name="Carlson J.W."/>
            <person name="Brokstein P."/>
            <person name="Yu C."/>
            <person name="Champe M."/>
            <person name="George R.A."/>
            <person name="Guarin H."/>
            <person name="Kronmiller B."/>
            <person name="Pacleb J.M."/>
            <person name="Park S."/>
            <person name="Wan K.H."/>
            <person name="Rubin G.M."/>
            <person name="Celniker S.E."/>
        </authorList>
    </citation>
    <scope>NUCLEOTIDE SEQUENCE [LARGE SCALE MRNA]</scope>
    <source>
        <strain>Berkeley</strain>
        <tissue>Embryo</tissue>
    </source>
</reference>
<reference evidence="7" key="4">
    <citation type="journal article" date="2012" name="Biochem. J.">
        <title>A preliminary characterization of the cytosolic glutathione transferase proteome from Drosophila melanogaster.</title>
        <authorList>
            <person name="Saisawang C."/>
            <person name="Wongsantichon J."/>
            <person name="Ketterman A.J."/>
        </authorList>
    </citation>
    <scope>FUNCTION</scope>
    <scope>CATALYTIC ACTIVITY</scope>
    <scope>BIOPHYSICOCHEMICAL PROPERTIES</scope>
</reference>
<reference evidence="7" key="5">
    <citation type="journal article" date="2014" name="Nat. Cell Biol.">
        <title>Pri peptides are mediators of ecdysone for the temporal control of development.</title>
        <authorList>
            <person name="Chanut-Delalande H."/>
            <person name="Hashimoto Y."/>
            <person name="Pelissier-Monier A."/>
            <person name="Spokony R."/>
            <person name="Dib A."/>
            <person name="Kondo T."/>
            <person name="Bohere J."/>
            <person name="Niimi K."/>
            <person name="Latapie Y."/>
            <person name="Inagaki S."/>
            <person name="Dubois L."/>
            <person name="Valenti P."/>
            <person name="Polesello C."/>
            <person name="Kobayashi S."/>
            <person name="Moussian B."/>
            <person name="White K.P."/>
            <person name="Plaza S."/>
            <person name="Kageyama Y."/>
            <person name="Payre F."/>
        </authorList>
    </citation>
    <scope>FUNCTION</scope>
    <scope>DEVELOPMENTAL STAGE</scope>
    <scope>DISRUPTION PHENOTYPE</scope>
</reference>
<reference evidence="7" key="6">
    <citation type="journal article" date="2014" name="Sci. Rep.">
        <title>A Halloween gene noppera-bo encodes a glutathione S-transferase essential for ecdysteroid biosynthesis via regulating the behaviour of cholesterol in Drosophila.</title>
        <authorList>
            <person name="Enya S."/>
            <person name="Ameku T."/>
            <person name="Igarashi F."/>
            <person name="Iga M."/>
            <person name="Kataoka H."/>
            <person name="Shinoda T."/>
            <person name="Niwa R."/>
        </authorList>
    </citation>
    <scope>FUNCTION</scope>
    <scope>TISSUE SPECIFICITY</scope>
    <scope>DEVELOPMENTAL STAGE</scope>
    <scope>DISRUPTION PHENOTYPE</scope>
</reference>
<comment type="function">
    <text evidence="1 2 3">Conjugation of reduced glutathione to a wide number of exogenous and endogenous hydrophobic electrophiles (PubMed:22082028). Essential for ecdysteroid biosynthesis (PubMed:25300303, PubMed:25344753). May be involved in detoxification (PubMed:22082028).</text>
</comment>
<comment type="catalytic activity">
    <reaction evidence="1">
        <text>RX + glutathione = an S-substituted glutathione + a halide anion + H(+)</text>
        <dbReference type="Rhea" id="RHEA:16437"/>
        <dbReference type="ChEBI" id="CHEBI:15378"/>
        <dbReference type="ChEBI" id="CHEBI:16042"/>
        <dbReference type="ChEBI" id="CHEBI:17792"/>
        <dbReference type="ChEBI" id="CHEBI:57925"/>
        <dbReference type="ChEBI" id="CHEBI:90779"/>
        <dbReference type="EC" id="2.5.1.18"/>
    </reaction>
</comment>
<comment type="biophysicochemical properties">
    <kinetics>
        <KM evidence="1">3.84 mM for glutathione</KM>
        <KM evidence="1">0.28 mM for 1-chloro-2,4-dinitrobenzene</KM>
        <Vmax evidence="1">133.0 umol/min/mg enzyme with 1-chloro-2,4-dinitrobenzene as substrate</Vmax>
        <Vmax evidence="1">2.75 umol/min/mg enzyme with 4-hydroxy-2-nonenal as substrate</Vmax>
        <Vmax evidence="1">0.322 umol/min/mg enzyme with phenethyl isothiocyanate as substrate</Vmax>
    </kinetics>
</comment>
<comment type="tissue specificity">
    <text evidence="2">Expressed in the adult ovary (at protein level).</text>
</comment>
<comment type="developmental stage">
    <text evidence="2 3">In early embryos expression is ubiquitous (PubMed:25344753). From mid-embryogenesis (stage 16) and throughout larval development, expressed in the prothoracic gland cells of the ring gland (PubMed:25300303, PubMed:25344753). Weak expression in the follicle cells of the ovarioles in developing egg chambers (at protein level) (PubMed:25300303).</text>
</comment>
<comment type="disruption phenotype">
    <text evidence="2 3">Embryonic lethal. Embryos display severe developmental defects such as poorly differentiated cuticle, failure of head involution, abnormal gut looping, and defective mouth hooks and dorsal closure (PubMed:25300303, PubMed:25344753). Trichromes are absent (PubMed:25344753). Embryos have a higher sterol content (PubMed:25300303, PubMed:25344753). Embryonic lethality, defective epidermal differentiation and trichome development can be rescued by supplementing embryos with 20-hydroxyecdysone (20E), ecdysone or cholesterol (PubMed:25344753). RNAi-mediated knockdown results in larval lethality at the second instar stage, which can be rescued by supplementing larvae with 20E, ecdysone or cholesterol (PubMed:25300303).</text>
</comment>
<comment type="miscellaneous">
    <text evidence="5 6">Member of the Halloween gene group.</text>
</comment>
<comment type="similarity">
    <text evidence="4">Belongs to the GST superfamily. Epsilon family.</text>
</comment>
<gene>
    <name evidence="9" type="primary">GstE14</name>
    <name evidence="9" type="synonym">GSTD14-14</name>
    <name evidence="5" type="synonym">nobo</name>
    <name evidence="9" type="ORF">CG4688</name>
</gene>
<evidence type="ECO:0000269" key="1">
    <source>
    </source>
</evidence>
<evidence type="ECO:0000269" key="2">
    <source>
    </source>
</evidence>
<evidence type="ECO:0000269" key="3">
    <source>
    </source>
</evidence>
<evidence type="ECO:0000303" key="4">
    <source>
    </source>
</evidence>
<evidence type="ECO:0000303" key="5">
    <source>
    </source>
</evidence>
<evidence type="ECO:0000303" key="6">
    <source>
    </source>
</evidence>
<evidence type="ECO:0000305" key="7"/>
<evidence type="ECO:0000312" key="8">
    <source>
        <dbReference type="EMBL" id="AAL49335.1"/>
    </source>
</evidence>
<evidence type="ECO:0000312" key="9">
    <source>
        <dbReference type="FlyBase" id="FBgn0033817"/>
    </source>
</evidence>
<evidence type="ECO:0000312" key="10">
    <source>
        <dbReference type="Proteomes" id="UP000000803"/>
    </source>
</evidence>
<evidence type="ECO:0007829" key="11">
    <source>
        <dbReference type="PDB" id="6T2T"/>
    </source>
</evidence>
<evidence type="ECO:0007829" key="12">
    <source>
        <dbReference type="PDB" id="7DAY"/>
    </source>
</evidence>
<evidence type="ECO:0007829" key="13">
    <source>
        <dbReference type="PDB" id="7DB4"/>
    </source>
</evidence>
<accession>Q7JYX0</accession>
<organism evidence="8">
    <name type="scientific">Drosophila melanogaster</name>
    <name type="common">Fruit fly</name>
    <dbReference type="NCBI Taxonomy" id="7227"/>
    <lineage>
        <taxon>Eukaryota</taxon>
        <taxon>Metazoa</taxon>
        <taxon>Ecdysozoa</taxon>
        <taxon>Arthropoda</taxon>
        <taxon>Hexapoda</taxon>
        <taxon>Insecta</taxon>
        <taxon>Pterygota</taxon>
        <taxon>Neoptera</taxon>
        <taxon>Endopterygota</taxon>
        <taxon>Diptera</taxon>
        <taxon>Brachycera</taxon>
        <taxon>Muscomorpha</taxon>
        <taxon>Ephydroidea</taxon>
        <taxon>Drosophilidae</taxon>
        <taxon>Drosophila</taxon>
        <taxon>Sophophora</taxon>
    </lineage>
</organism>
<keyword id="KW-0002">3D-structure</keyword>
<keyword id="KW-0216">Detoxification</keyword>
<keyword id="KW-0444">Lipid biosynthesis</keyword>
<keyword id="KW-0443">Lipid metabolism</keyword>
<keyword id="KW-1185">Reference proteome</keyword>
<keyword id="KW-0752">Steroid biosynthesis</keyword>
<keyword id="KW-0808">Transferase</keyword>
<feature type="chain" id="PRO_0000433644" description="Glutathione S-transferase E14">
    <location>
        <begin position="1"/>
        <end position="232"/>
    </location>
</feature>
<feature type="domain" description="GST N-terminal">
    <location>
        <begin position="4"/>
        <end position="85"/>
    </location>
</feature>
<feature type="domain" description="GST C-terminal">
    <location>
        <begin position="91"/>
        <end position="218"/>
    </location>
</feature>
<feature type="strand" evidence="11">
    <location>
        <begin position="7"/>
        <end position="10"/>
    </location>
</feature>
<feature type="helix" evidence="11">
    <location>
        <begin position="15"/>
        <end position="26"/>
    </location>
</feature>
<feature type="strand" evidence="11">
    <location>
        <begin position="32"/>
        <end position="35"/>
    </location>
</feature>
<feature type="helix" evidence="11">
    <location>
        <begin position="38"/>
        <end position="40"/>
    </location>
</feature>
<feature type="helix" evidence="11">
    <location>
        <begin position="42"/>
        <end position="44"/>
    </location>
</feature>
<feature type="helix" evidence="11">
    <location>
        <begin position="46"/>
        <end position="51"/>
    </location>
</feature>
<feature type="strand" evidence="11">
    <location>
        <begin position="59"/>
        <end position="62"/>
    </location>
</feature>
<feature type="strand" evidence="11">
    <location>
        <begin position="65"/>
        <end position="67"/>
    </location>
</feature>
<feature type="helix" evidence="11">
    <location>
        <begin position="70"/>
        <end position="81"/>
    </location>
</feature>
<feature type="strand" evidence="11">
    <location>
        <begin position="86"/>
        <end position="88"/>
    </location>
</feature>
<feature type="helix" evidence="11">
    <location>
        <begin position="92"/>
        <end position="107"/>
    </location>
</feature>
<feature type="helix" evidence="11">
    <location>
        <begin position="109"/>
        <end position="123"/>
    </location>
</feature>
<feature type="helix" evidence="11">
    <location>
        <begin position="125"/>
        <end position="127"/>
    </location>
</feature>
<feature type="helix" evidence="11">
    <location>
        <begin position="130"/>
        <end position="147"/>
    </location>
</feature>
<feature type="turn" evidence="11">
    <location>
        <begin position="148"/>
        <end position="150"/>
    </location>
</feature>
<feature type="strand" evidence="13">
    <location>
        <begin position="151"/>
        <end position="153"/>
    </location>
</feature>
<feature type="strand" evidence="11">
    <location>
        <begin position="156"/>
        <end position="158"/>
    </location>
</feature>
<feature type="helix" evidence="11">
    <location>
        <begin position="161"/>
        <end position="173"/>
    </location>
</feature>
<feature type="turn" evidence="11">
    <location>
        <begin position="174"/>
        <end position="176"/>
    </location>
</feature>
<feature type="helix" evidence="11">
    <location>
        <begin position="183"/>
        <end position="193"/>
    </location>
</feature>
<feature type="helix" evidence="11">
    <location>
        <begin position="196"/>
        <end position="198"/>
    </location>
</feature>
<feature type="helix" evidence="11">
    <location>
        <begin position="199"/>
        <end position="216"/>
    </location>
</feature>
<feature type="turn" evidence="12">
    <location>
        <begin position="222"/>
        <end position="224"/>
    </location>
</feature>
<feature type="turn" evidence="11">
    <location>
        <begin position="229"/>
        <end position="231"/>
    </location>
</feature>
<dbReference type="EC" id="2.5.1.18" evidence="1"/>
<dbReference type="EMBL" id="AE013599">
    <property type="protein sequence ID" value="AAF58397.1"/>
    <property type="molecule type" value="Genomic_DNA"/>
</dbReference>
<dbReference type="EMBL" id="AY071713">
    <property type="protein sequence ID" value="AAL49335.1"/>
    <property type="molecule type" value="mRNA"/>
</dbReference>
<dbReference type="RefSeq" id="NP_610855.1">
    <property type="nucleotide sequence ID" value="NM_137011.3"/>
</dbReference>
<dbReference type="PDB" id="6KEL">
    <property type="method" value="X-ray"/>
    <property type="resolution" value="1.40 A"/>
    <property type="chains" value="AA/BA=1-232"/>
</dbReference>
<dbReference type="PDB" id="6KEM">
    <property type="method" value="X-ray"/>
    <property type="resolution" value="1.50 A"/>
    <property type="chains" value="AA/BA=1-232"/>
</dbReference>
<dbReference type="PDB" id="6KEN">
    <property type="method" value="X-ray"/>
    <property type="resolution" value="1.75 A"/>
    <property type="chains" value="AA/BA=1-232"/>
</dbReference>
<dbReference type="PDB" id="6KEO">
    <property type="method" value="X-ray"/>
    <property type="resolution" value="1.58 A"/>
    <property type="chains" value="AA/BA=1-232"/>
</dbReference>
<dbReference type="PDB" id="6KEP">
    <property type="method" value="X-ray"/>
    <property type="resolution" value="1.55 A"/>
    <property type="chains" value="AA/BA=1-232"/>
</dbReference>
<dbReference type="PDB" id="6KEQ">
    <property type="method" value="X-ray"/>
    <property type="resolution" value="1.84 A"/>
    <property type="chains" value="AA/BA=1-232"/>
</dbReference>
<dbReference type="PDB" id="6KER">
    <property type="method" value="X-ray"/>
    <property type="resolution" value="1.84 A"/>
    <property type="chains" value="AA/BA=1-232"/>
</dbReference>
<dbReference type="PDB" id="6T2T">
    <property type="method" value="X-ray"/>
    <property type="resolution" value="1.30 A"/>
    <property type="chains" value="A=1-232"/>
</dbReference>
<dbReference type="PDB" id="7DAX">
    <property type="method" value="X-ray"/>
    <property type="resolution" value="1.70 A"/>
    <property type="chains" value="A/B=1-232"/>
</dbReference>
<dbReference type="PDB" id="7DAY">
    <property type="method" value="X-ray"/>
    <property type="resolution" value="1.48 A"/>
    <property type="chains" value="A/B=1-232"/>
</dbReference>
<dbReference type="PDB" id="7DAZ">
    <property type="method" value="X-ray"/>
    <property type="resolution" value="1.64 A"/>
    <property type="chains" value="A/B=1-232"/>
</dbReference>
<dbReference type="PDB" id="7DB0">
    <property type="method" value="X-ray"/>
    <property type="resolution" value="1.66 A"/>
    <property type="chains" value="A/B=1-232"/>
</dbReference>
<dbReference type="PDB" id="7DB1">
    <property type="method" value="X-ray"/>
    <property type="resolution" value="1.83 A"/>
    <property type="chains" value="A/B=1-232"/>
</dbReference>
<dbReference type="PDB" id="7DB2">
    <property type="method" value="X-ray"/>
    <property type="resolution" value="1.40 A"/>
    <property type="chains" value="A/B=1-232"/>
</dbReference>
<dbReference type="PDB" id="7DB3">
    <property type="method" value="X-ray"/>
    <property type="resolution" value="1.70 A"/>
    <property type="chains" value="A/B=1-232"/>
</dbReference>
<dbReference type="PDB" id="7DB4">
    <property type="method" value="X-ray"/>
    <property type="resolution" value="1.54 A"/>
    <property type="chains" value="A/B=1-232"/>
</dbReference>
<dbReference type="PDBsum" id="6KEL"/>
<dbReference type="PDBsum" id="6KEM"/>
<dbReference type="PDBsum" id="6KEN"/>
<dbReference type="PDBsum" id="6KEO"/>
<dbReference type="PDBsum" id="6KEP"/>
<dbReference type="PDBsum" id="6KEQ"/>
<dbReference type="PDBsum" id="6KER"/>
<dbReference type="PDBsum" id="6T2T"/>
<dbReference type="PDBsum" id="7DAX"/>
<dbReference type="PDBsum" id="7DAY"/>
<dbReference type="PDBsum" id="7DAZ"/>
<dbReference type="PDBsum" id="7DB0"/>
<dbReference type="PDBsum" id="7DB1"/>
<dbReference type="PDBsum" id="7DB2"/>
<dbReference type="PDBsum" id="7DB3"/>
<dbReference type="PDBsum" id="7DB4"/>
<dbReference type="SMR" id="Q7JYX0"/>
<dbReference type="FunCoup" id="Q7JYX0">
    <property type="interactions" value="372"/>
</dbReference>
<dbReference type="IntAct" id="Q7JYX0">
    <property type="interactions" value="1"/>
</dbReference>
<dbReference type="STRING" id="7227.FBpp0086857"/>
<dbReference type="PaxDb" id="7227-FBpp0086857"/>
<dbReference type="DNASU" id="36467"/>
<dbReference type="EnsemblMetazoa" id="FBtr0087744">
    <property type="protein sequence ID" value="FBpp0086857"/>
    <property type="gene ID" value="FBgn0033817"/>
</dbReference>
<dbReference type="GeneID" id="36467"/>
<dbReference type="KEGG" id="dme:Dmel_CG4688"/>
<dbReference type="UCSC" id="CG4688-RA">
    <property type="organism name" value="d. melanogaster"/>
</dbReference>
<dbReference type="AGR" id="FB:FBgn0033817"/>
<dbReference type="CTD" id="36467"/>
<dbReference type="FlyBase" id="FBgn0033817">
    <property type="gene designation" value="GstE14"/>
</dbReference>
<dbReference type="VEuPathDB" id="VectorBase:FBgn0033817"/>
<dbReference type="eggNOG" id="KOG0867">
    <property type="taxonomic scope" value="Eukaryota"/>
</dbReference>
<dbReference type="HOGENOM" id="CLU_011226_2_1_1"/>
<dbReference type="InParanoid" id="Q7JYX0"/>
<dbReference type="OMA" id="DFMSAIV"/>
<dbReference type="OrthoDB" id="2309723at2759"/>
<dbReference type="PhylomeDB" id="Q7JYX0"/>
<dbReference type="SABIO-RK" id="Q7JYX0"/>
<dbReference type="BioGRID-ORCS" id="36467">
    <property type="hits" value="0 hits in 1 CRISPR screen"/>
</dbReference>
<dbReference type="GenomeRNAi" id="36467"/>
<dbReference type="PRO" id="PR:Q7JYX0"/>
<dbReference type="Proteomes" id="UP000000803">
    <property type="component" value="Chromosome 2R"/>
</dbReference>
<dbReference type="Bgee" id="FBgn0033817">
    <property type="expression patterns" value="Expressed in compound eye cone cell in insect head and 16 other cell types or tissues"/>
</dbReference>
<dbReference type="GO" id="GO:0005737">
    <property type="term" value="C:cytoplasm"/>
    <property type="evidence" value="ECO:0000250"/>
    <property type="project" value="FlyBase"/>
</dbReference>
<dbReference type="GO" id="GO:0004364">
    <property type="term" value="F:glutathione transferase activity"/>
    <property type="evidence" value="ECO:0000314"/>
    <property type="project" value="FlyBase"/>
</dbReference>
<dbReference type="GO" id="GO:0004769">
    <property type="term" value="F:steroid Delta-isomerase activity"/>
    <property type="evidence" value="ECO:0000314"/>
    <property type="project" value="FlyBase"/>
</dbReference>
<dbReference type="GO" id="GO:0042632">
    <property type="term" value="P:cholesterol homeostasis"/>
    <property type="evidence" value="ECO:0000315"/>
    <property type="project" value="FlyBase"/>
</dbReference>
<dbReference type="GO" id="GO:0045456">
    <property type="term" value="P:ecdysteroid biosynthetic process"/>
    <property type="evidence" value="ECO:0000315"/>
    <property type="project" value="FlyBase"/>
</dbReference>
<dbReference type="GO" id="GO:0006749">
    <property type="term" value="P:glutathione metabolic process"/>
    <property type="evidence" value="ECO:0000314"/>
    <property type="project" value="FlyBase"/>
</dbReference>
<dbReference type="GO" id="GO:0009636">
    <property type="term" value="P:response to toxic substance"/>
    <property type="evidence" value="ECO:0007669"/>
    <property type="project" value="UniProtKB-KW"/>
</dbReference>
<dbReference type="CDD" id="cd03177">
    <property type="entry name" value="GST_C_Delta_Epsilon"/>
    <property type="match status" value="1"/>
</dbReference>
<dbReference type="CDD" id="cd03045">
    <property type="entry name" value="GST_N_Delta_Epsilon"/>
    <property type="match status" value="1"/>
</dbReference>
<dbReference type="FunFam" id="3.40.30.10:FF:000208">
    <property type="entry name" value="glutathione S-transferase 1"/>
    <property type="match status" value="1"/>
</dbReference>
<dbReference type="FunFam" id="1.20.1050.10:FF:000007">
    <property type="entry name" value="Glutathione S-transferase 1-1"/>
    <property type="match status" value="1"/>
</dbReference>
<dbReference type="Gene3D" id="1.20.1050.10">
    <property type="match status" value="1"/>
</dbReference>
<dbReference type="Gene3D" id="3.40.30.10">
    <property type="entry name" value="Glutaredoxin"/>
    <property type="match status" value="1"/>
</dbReference>
<dbReference type="InterPro" id="IPR010987">
    <property type="entry name" value="Glutathione-S-Trfase_C-like"/>
</dbReference>
<dbReference type="InterPro" id="IPR036282">
    <property type="entry name" value="Glutathione-S-Trfase_C_sf"/>
</dbReference>
<dbReference type="InterPro" id="IPR004045">
    <property type="entry name" value="Glutathione_S-Trfase_N"/>
</dbReference>
<dbReference type="InterPro" id="IPR004046">
    <property type="entry name" value="GST_C"/>
</dbReference>
<dbReference type="InterPro" id="IPR036249">
    <property type="entry name" value="Thioredoxin-like_sf"/>
</dbReference>
<dbReference type="PANTHER" id="PTHR43969">
    <property type="entry name" value="GLUTATHIONE S TRANSFERASE D10, ISOFORM A-RELATED"/>
    <property type="match status" value="1"/>
</dbReference>
<dbReference type="PANTHER" id="PTHR43969:SF5">
    <property type="entry name" value="GLUTATHIONE S-TRANSFERASE E14"/>
    <property type="match status" value="1"/>
</dbReference>
<dbReference type="Pfam" id="PF00043">
    <property type="entry name" value="GST_C"/>
    <property type="match status" value="1"/>
</dbReference>
<dbReference type="Pfam" id="PF02798">
    <property type="entry name" value="GST_N"/>
    <property type="match status" value="1"/>
</dbReference>
<dbReference type="SFLD" id="SFLDG01153">
    <property type="entry name" value="Main.4:_Theta-like"/>
    <property type="match status" value="1"/>
</dbReference>
<dbReference type="SFLD" id="SFLDG00358">
    <property type="entry name" value="Main_(cytGST)"/>
    <property type="match status" value="1"/>
</dbReference>
<dbReference type="SUPFAM" id="SSF47616">
    <property type="entry name" value="GST C-terminal domain-like"/>
    <property type="match status" value="1"/>
</dbReference>
<dbReference type="SUPFAM" id="SSF52833">
    <property type="entry name" value="Thioredoxin-like"/>
    <property type="match status" value="1"/>
</dbReference>
<dbReference type="PROSITE" id="PS50405">
    <property type="entry name" value="GST_CTER"/>
    <property type="match status" value="1"/>
</dbReference>
<dbReference type="PROSITE" id="PS50404">
    <property type="entry name" value="GST_NTER"/>
    <property type="match status" value="1"/>
</dbReference>
<proteinExistence type="evidence at protein level"/>
<name>GSTEE_DROME</name>
<protein>
    <recommendedName>
        <fullName evidence="4">Glutathione S-transferase E14</fullName>
        <ecNumber evidence="1">2.5.1.18</ecNumber>
    </recommendedName>
    <alternativeName>
        <fullName evidence="5">Protein noppera-bo</fullName>
    </alternativeName>
</protein>